<evidence type="ECO:0000255" key="1">
    <source>
        <dbReference type="HAMAP-Rule" id="MF_00197"/>
    </source>
</evidence>
<dbReference type="EC" id="5.1.1.7" evidence="1"/>
<dbReference type="EMBL" id="CP000511">
    <property type="protein sequence ID" value="ABM13248.1"/>
    <property type="molecule type" value="Genomic_DNA"/>
</dbReference>
<dbReference type="RefSeq" id="WP_011779660.1">
    <property type="nucleotide sequence ID" value="NZ_JACKSD010000041.1"/>
</dbReference>
<dbReference type="SMR" id="A1T7U8"/>
<dbReference type="STRING" id="350058.Mvan_2435"/>
<dbReference type="KEGG" id="mva:Mvan_2435"/>
<dbReference type="eggNOG" id="COG0253">
    <property type="taxonomic scope" value="Bacteria"/>
</dbReference>
<dbReference type="HOGENOM" id="CLU_053306_4_0_11"/>
<dbReference type="UniPathway" id="UPA00034">
    <property type="reaction ID" value="UER00025"/>
</dbReference>
<dbReference type="Proteomes" id="UP000009159">
    <property type="component" value="Chromosome"/>
</dbReference>
<dbReference type="GO" id="GO:0005829">
    <property type="term" value="C:cytosol"/>
    <property type="evidence" value="ECO:0007669"/>
    <property type="project" value="TreeGrafter"/>
</dbReference>
<dbReference type="GO" id="GO:0008837">
    <property type="term" value="F:diaminopimelate epimerase activity"/>
    <property type="evidence" value="ECO:0007669"/>
    <property type="project" value="UniProtKB-UniRule"/>
</dbReference>
<dbReference type="GO" id="GO:0009089">
    <property type="term" value="P:lysine biosynthetic process via diaminopimelate"/>
    <property type="evidence" value="ECO:0007669"/>
    <property type="project" value="UniProtKB-UniRule"/>
</dbReference>
<dbReference type="Gene3D" id="3.10.310.10">
    <property type="entry name" value="Diaminopimelate Epimerase, Chain A, domain 1"/>
    <property type="match status" value="2"/>
</dbReference>
<dbReference type="HAMAP" id="MF_00197">
    <property type="entry name" value="DAP_epimerase"/>
    <property type="match status" value="1"/>
</dbReference>
<dbReference type="InterPro" id="IPR018510">
    <property type="entry name" value="DAP_epimerase_AS"/>
</dbReference>
<dbReference type="InterPro" id="IPR001653">
    <property type="entry name" value="DAP_epimerase_DapF"/>
</dbReference>
<dbReference type="NCBIfam" id="TIGR00652">
    <property type="entry name" value="DapF"/>
    <property type="match status" value="1"/>
</dbReference>
<dbReference type="PANTHER" id="PTHR31689:SF0">
    <property type="entry name" value="DIAMINOPIMELATE EPIMERASE"/>
    <property type="match status" value="1"/>
</dbReference>
<dbReference type="PANTHER" id="PTHR31689">
    <property type="entry name" value="DIAMINOPIMELATE EPIMERASE, CHLOROPLASTIC"/>
    <property type="match status" value="1"/>
</dbReference>
<dbReference type="Pfam" id="PF01678">
    <property type="entry name" value="DAP_epimerase"/>
    <property type="match status" value="2"/>
</dbReference>
<dbReference type="SUPFAM" id="SSF54506">
    <property type="entry name" value="Diaminopimelate epimerase-like"/>
    <property type="match status" value="2"/>
</dbReference>
<dbReference type="PROSITE" id="PS01326">
    <property type="entry name" value="DAP_EPIMERASE"/>
    <property type="match status" value="1"/>
</dbReference>
<organism>
    <name type="scientific">Mycolicibacterium vanbaalenii (strain DSM 7251 / JCM 13017 / BCRC 16820 / KCTC 9966 / NRRL B-24157 / PYR-1)</name>
    <name type="common">Mycobacterium vanbaalenii</name>
    <dbReference type="NCBI Taxonomy" id="350058"/>
    <lineage>
        <taxon>Bacteria</taxon>
        <taxon>Bacillati</taxon>
        <taxon>Actinomycetota</taxon>
        <taxon>Actinomycetes</taxon>
        <taxon>Mycobacteriales</taxon>
        <taxon>Mycobacteriaceae</taxon>
        <taxon>Mycolicibacterium</taxon>
    </lineage>
</organism>
<accession>A1T7U8</accession>
<keyword id="KW-0028">Amino-acid biosynthesis</keyword>
<keyword id="KW-0963">Cytoplasm</keyword>
<keyword id="KW-0413">Isomerase</keyword>
<keyword id="KW-0457">Lysine biosynthesis</keyword>
<gene>
    <name evidence="1" type="primary">dapF</name>
    <name type="ordered locus">Mvan_2435</name>
</gene>
<sequence>MKFAKGHGTQNDFVLLPDLTADLALTPAAVAALCDRRQGLGADGVLRVTTAGAARAAGVFDRLPEGVVEGDWYMDYRNADGSIAQMCGNGVRVFAHYLRASGLESRDEFVVGSLAGPRPVVLNALAGVGADVTVEMGKANQLGVGAATVGGRQFNGLAVDVGNPHLACVDAAMSSRELAALDVAAPVVFDAAQFPDGVNVEVLTAPEDGAVSMRVHERGVGETRSCGTGTVAAAVAALAHQGSQTGSLTVRIPGGEVVVTITDANSYLRGPSVLVAHGDLADEWWAAQG</sequence>
<comment type="function">
    <text evidence="1">Catalyzes the stereoinversion of LL-2,6-diaminopimelate (L,L-DAP) to meso-diaminopimelate (meso-DAP), a precursor of L-lysine and an essential component of the bacterial peptidoglycan.</text>
</comment>
<comment type="catalytic activity">
    <reaction evidence="1">
        <text>(2S,6S)-2,6-diaminopimelate = meso-2,6-diaminopimelate</text>
        <dbReference type="Rhea" id="RHEA:15393"/>
        <dbReference type="ChEBI" id="CHEBI:57609"/>
        <dbReference type="ChEBI" id="CHEBI:57791"/>
        <dbReference type="EC" id="5.1.1.7"/>
    </reaction>
</comment>
<comment type="pathway">
    <text evidence="1">Amino-acid biosynthesis; L-lysine biosynthesis via DAP pathway; DL-2,6-diaminopimelate from LL-2,6-diaminopimelate: step 1/1.</text>
</comment>
<comment type="subunit">
    <text evidence="1">Homodimer.</text>
</comment>
<comment type="subcellular location">
    <subcellularLocation>
        <location evidence="1">Cytoplasm</location>
    </subcellularLocation>
</comment>
<comment type="similarity">
    <text evidence="1">Belongs to the diaminopimelate epimerase family.</text>
</comment>
<proteinExistence type="inferred from homology"/>
<reference key="1">
    <citation type="submission" date="2006-12" db="EMBL/GenBank/DDBJ databases">
        <title>Complete sequence of Mycobacterium vanbaalenii PYR-1.</title>
        <authorList>
            <consortium name="US DOE Joint Genome Institute"/>
            <person name="Copeland A."/>
            <person name="Lucas S."/>
            <person name="Lapidus A."/>
            <person name="Barry K."/>
            <person name="Detter J.C."/>
            <person name="Glavina del Rio T."/>
            <person name="Hammon N."/>
            <person name="Israni S."/>
            <person name="Dalin E."/>
            <person name="Tice H."/>
            <person name="Pitluck S."/>
            <person name="Singan V."/>
            <person name="Schmutz J."/>
            <person name="Larimer F."/>
            <person name="Land M."/>
            <person name="Hauser L."/>
            <person name="Kyrpides N."/>
            <person name="Anderson I.J."/>
            <person name="Miller C."/>
            <person name="Richardson P."/>
        </authorList>
    </citation>
    <scope>NUCLEOTIDE SEQUENCE [LARGE SCALE GENOMIC DNA]</scope>
    <source>
        <strain>DSM 7251 / JCM 13017 / BCRC 16820 / KCTC 9966 / NRRL B-24157 / PYR-1</strain>
    </source>
</reference>
<name>DAPF_MYCVP</name>
<protein>
    <recommendedName>
        <fullName evidence="1">Diaminopimelate epimerase</fullName>
        <shortName evidence="1">DAP epimerase</shortName>
        <ecNumber evidence="1">5.1.1.7</ecNumber>
    </recommendedName>
    <alternativeName>
        <fullName evidence="1">PLP-independent amino acid racemase</fullName>
    </alternativeName>
</protein>
<feature type="chain" id="PRO_1000011914" description="Diaminopimelate epimerase">
    <location>
        <begin position="1"/>
        <end position="289"/>
    </location>
</feature>
<feature type="active site" description="Proton donor" evidence="1">
    <location>
        <position position="87"/>
    </location>
</feature>
<feature type="active site" description="Proton acceptor" evidence="1">
    <location>
        <position position="226"/>
    </location>
</feature>
<feature type="binding site" evidence="1">
    <location>
        <position position="11"/>
    </location>
    <ligand>
        <name>substrate</name>
    </ligand>
</feature>
<feature type="binding site" evidence="1">
    <location>
        <position position="78"/>
    </location>
    <ligand>
        <name>substrate</name>
    </ligand>
</feature>
<feature type="binding site" evidence="1">
    <location>
        <begin position="88"/>
        <end position="89"/>
    </location>
    <ligand>
        <name>substrate</name>
    </ligand>
</feature>
<feature type="binding site" evidence="1">
    <location>
        <position position="163"/>
    </location>
    <ligand>
        <name>substrate</name>
    </ligand>
</feature>
<feature type="binding site" evidence="1">
    <location>
        <position position="199"/>
    </location>
    <ligand>
        <name>substrate</name>
    </ligand>
</feature>
<feature type="binding site" evidence="1">
    <location>
        <begin position="217"/>
        <end position="218"/>
    </location>
    <ligand>
        <name>substrate</name>
    </ligand>
</feature>
<feature type="binding site" evidence="1">
    <location>
        <begin position="227"/>
        <end position="228"/>
    </location>
    <ligand>
        <name>substrate</name>
    </ligand>
</feature>
<feature type="site" description="Could be important to modulate the pK values of the two catalytic cysteine residues" evidence="1">
    <location>
        <position position="165"/>
    </location>
</feature>
<feature type="site" description="Could be important to modulate the pK values of the two catalytic cysteine residues" evidence="1">
    <location>
        <position position="217"/>
    </location>
</feature>